<feature type="chain" id="PRO_0000221583" description="Trichodiene synthase">
    <location>
        <begin position="1"/>
        <end position="375"/>
    </location>
</feature>
<feature type="sequence variant" description="In strain: NRRL 28065.">
    <original>N</original>
    <variation>D</variation>
    <location>
        <position position="279"/>
    </location>
</feature>
<protein>
    <recommendedName>
        <fullName>Trichodiene synthase</fullName>
        <ecNumber>4.2.3.6</ecNumber>
    </recommendedName>
    <alternativeName>
        <fullName>Sesquiterpene cyclase</fullName>
        <shortName>TS</shortName>
    </alternativeName>
</protein>
<sequence>MENFPTEYFLNTSVRLLEYIRYRDSNYTREERIENLHYAYNKAAHHFAQPRQQQLLKVDPKRLQASLQTIVGMVVYSWAKVSKECMADLSIHYTYTLVLDDSSDDPYPAMLNYFGDLQAGREQAHPWWALVNEHFPNVLRHFGPFCSLNLIRSTMDFFEGCWIEQYNFGGFPGSDDYPQFLRRMNGLGHCVGASLWPKDLFDERKHFLEITSAVAQMENWMVWVNDLMSFYKEFDDERDQISLVKNFVTCHEITLDEALEKLTQETLHSSKQMVAVFSNKDPQVMDTIECFMHGYVTWHLCDARYRLHEIYEKVKDQDTEDAKKFCKFFEQAANVGAVAPSEWAYPPVAQLANVRAKGDVKEAQKPFLSSIELVE</sequence>
<comment type="function">
    <text>TS is a member of the terpene cyclase group of enzymes. It catalyzes the isomerization and cyclization of farnesyl pyro-phosphate to form trichodiene, the first cyclic intermediate in the biosynthetic pathway for trichothecenes. It serves to branch trichothecene biosynthesis from the isoprenoid pathway.</text>
</comment>
<comment type="catalytic activity">
    <reaction>
        <text>(2E,6E)-farnesyl diphosphate = trichodiene + diphosphate</text>
        <dbReference type="Rhea" id="RHEA:12052"/>
        <dbReference type="ChEBI" id="CHEBI:15861"/>
        <dbReference type="ChEBI" id="CHEBI:33019"/>
        <dbReference type="ChEBI" id="CHEBI:175763"/>
        <dbReference type="EC" id="4.2.3.6"/>
    </reaction>
</comment>
<comment type="pathway">
    <text>Sesquiterpene biosynthesis; trichothecene biosynthesis.</text>
</comment>
<comment type="miscellaneous">
    <text>Trichothecenes are sesquiterpenoid toxins that act by inhibiting protein biosynthesis.</text>
</comment>
<comment type="similarity">
    <text evidence="1">Belongs to the trichodiene synthase family.</text>
</comment>
<accession>Q8NID7</accession>
<accession>Q8NJC8</accession>
<proteinExistence type="inferred from homology"/>
<name>TRI5_FUSPS</name>
<gene>
    <name type="primary">TRI5</name>
</gene>
<organism>
    <name type="scientific">Fusarium pseudograminearum</name>
    <name type="common">Wheat and barley crown-rot fungus</name>
    <dbReference type="NCBI Taxonomy" id="101028"/>
    <lineage>
        <taxon>Eukaryota</taxon>
        <taxon>Fungi</taxon>
        <taxon>Dikarya</taxon>
        <taxon>Ascomycota</taxon>
        <taxon>Pezizomycotina</taxon>
        <taxon>Sordariomycetes</taxon>
        <taxon>Hypocreomycetidae</taxon>
        <taxon>Hypocreales</taxon>
        <taxon>Nectriaceae</taxon>
        <taxon>Fusarium</taxon>
    </lineage>
</organism>
<dbReference type="EC" id="4.2.3.6"/>
<dbReference type="EMBL" id="AY102580">
    <property type="protein sequence ID" value="AAM48854.1"/>
    <property type="molecule type" value="Genomic_DNA"/>
</dbReference>
<dbReference type="EMBL" id="AY102582">
    <property type="protein sequence ID" value="AAM48870.1"/>
    <property type="molecule type" value="Genomic_DNA"/>
</dbReference>
<dbReference type="EMBL" id="AY102583">
    <property type="protein sequence ID" value="AAM48878.1"/>
    <property type="molecule type" value="Genomic_DNA"/>
</dbReference>
<dbReference type="EMBL" id="AY102585">
    <property type="protein sequence ID" value="AAM48894.1"/>
    <property type="molecule type" value="Genomic_DNA"/>
</dbReference>
<dbReference type="SMR" id="Q8NID7"/>
<dbReference type="UniPathway" id="UPA00267"/>
<dbReference type="GO" id="GO:0045482">
    <property type="term" value="F:trichodiene synthase activity"/>
    <property type="evidence" value="ECO:0007669"/>
    <property type="project" value="UniProtKB-EC"/>
</dbReference>
<dbReference type="GO" id="GO:0016106">
    <property type="term" value="P:sesquiterpenoid biosynthetic process"/>
    <property type="evidence" value="ECO:0007669"/>
    <property type="project" value="InterPro"/>
</dbReference>
<dbReference type="Gene3D" id="1.10.600.10">
    <property type="entry name" value="Farnesyl Diphosphate Synthase"/>
    <property type="match status" value="1"/>
</dbReference>
<dbReference type="InterPro" id="IPR008949">
    <property type="entry name" value="Isoprenoid_synthase_dom_sf"/>
</dbReference>
<dbReference type="InterPro" id="IPR010458">
    <property type="entry name" value="TRI5_ascomyc"/>
</dbReference>
<dbReference type="InterPro" id="IPR024652">
    <property type="entry name" value="Trichodiene_synth"/>
</dbReference>
<dbReference type="Pfam" id="PF06330">
    <property type="entry name" value="TRI5"/>
    <property type="match status" value="1"/>
</dbReference>
<dbReference type="PIRSF" id="PIRSF001388">
    <property type="entry name" value="TRI5"/>
    <property type="match status" value="1"/>
</dbReference>
<dbReference type="SFLD" id="SFLDS00005">
    <property type="entry name" value="Isoprenoid_Synthase_Type_I"/>
    <property type="match status" value="1"/>
</dbReference>
<dbReference type="SFLD" id="SFLDG01021">
    <property type="entry name" value="Trichodiene_Synthase_Like"/>
    <property type="match status" value="1"/>
</dbReference>
<dbReference type="SUPFAM" id="SSF48576">
    <property type="entry name" value="Terpenoid synthases"/>
    <property type="match status" value="1"/>
</dbReference>
<evidence type="ECO:0000305" key="1"/>
<reference key="1">
    <citation type="journal article" date="2002" name="Proc. Natl. Acad. Sci. U.S.A.">
        <title>Ancestral polymorphism and adaptive evolution in the trichothecene mycotoxin gene cluster of phytopathogenic Fusarium.</title>
        <authorList>
            <person name="Ward T.J."/>
            <person name="Bielawski J.P."/>
            <person name="Kistler H.C."/>
            <person name="Sullivan E."/>
            <person name="O'Donnell K."/>
        </authorList>
    </citation>
    <scope>NUCLEOTIDE SEQUENCE [GENOMIC DNA]</scope>
    <source>
        <strain>CBS 109949 / FRC R-5291 / MAFF 237835 / NRRL 28334</strain>
        <strain>CBS 109953 / FRC R-6215 / MAFF 237846 / NRRL 28338</strain>
        <strain>CBS 109954 / FRC R-6761 / MAFF 237837 / NRRL 28065</strain>
        <strain>CBS 109956 / FGSC 9095 / FRC R-5291 / MAFF 237835 / NRRL 28062</strain>
    </source>
</reference>
<keyword id="KW-0456">Lyase</keyword>